<proteinExistence type="evidence at protein level"/>
<comment type="subcellular location">
    <subcellularLocation>
        <location>Secreted</location>
    </subcellularLocation>
</comment>
<comment type="tissue specificity">
    <text>Expressed by the venom duct.</text>
</comment>
<comment type="allergen">
    <text evidence="1">Causes an allergic reaction in human.</text>
</comment>
<comment type="similarity">
    <text evidence="2">Belongs to the peptidase S1 family.</text>
</comment>
<evidence type="ECO:0000250" key="1"/>
<evidence type="ECO:0000255" key="2">
    <source>
        <dbReference type="PROSITE-ProRule" id="PRU00274"/>
    </source>
</evidence>
<name>SP4_BOMPE</name>
<dbReference type="EC" id="3.4.21.-"/>
<dbReference type="PIR" id="A56338">
    <property type="entry name" value="A56338"/>
</dbReference>
<dbReference type="SMR" id="Q7M4I3"/>
<dbReference type="Allergome" id="154">
    <property type="allergen name" value="Bom p 4"/>
</dbReference>
<dbReference type="Allergome" id="3158">
    <property type="allergen name" value="Bom p 4.0101"/>
</dbReference>
<dbReference type="GO" id="GO:0005576">
    <property type="term" value="C:extracellular region"/>
    <property type="evidence" value="ECO:0007669"/>
    <property type="project" value="UniProtKB-SubCell"/>
</dbReference>
<dbReference type="GO" id="GO:0004252">
    <property type="term" value="F:serine-type endopeptidase activity"/>
    <property type="evidence" value="ECO:0007669"/>
    <property type="project" value="InterPro"/>
</dbReference>
<dbReference type="GO" id="GO:0006508">
    <property type="term" value="P:proteolysis"/>
    <property type="evidence" value="ECO:0007669"/>
    <property type="project" value="UniProtKB-KW"/>
</dbReference>
<dbReference type="CDD" id="cd00190">
    <property type="entry name" value="Tryp_SPc"/>
    <property type="match status" value="1"/>
</dbReference>
<dbReference type="FunFam" id="2.40.10.10:FF:000006">
    <property type="entry name" value="Serine proteinase stubble"/>
    <property type="match status" value="1"/>
</dbReference>
<dbReference type="Gene3D" id="2.40.10.10">
    <property type="entry name" value="Trypsin-like serine proteases"/>
    <property type="match status" value="2"/>
</dbReference>
<dbReference type="InterPro" id="IPR009003">
    <property type="entry name" value="Peptidase_S1_PA"/>
</dbReference>
<dbReference type="InterPro" id="IPR043504">
    <property type="entry name" value="Peptidase_S1_PA_chymotrypsin"/>
</dbReference>
<dbReference type="InterPro" id="IPR001314">
    <property type="entry name" value="Peptidase_S1A"/>
</dbReference>
<dbReference type="InterPro" id="IPR001254">
    <property type="entry name" value="Trypsin_dom"/>
</dbReference>
<dbReference type="InterPro" id="IPR018114">
    <property type="entry name" value="TRYPSIN_HIS"/>
</dbReference>
<dbReference type="InterPro" id="IPR033116">
    <property type="entry name" value="TRYPSIN_SER"/>
</dbReference>
<dbReference type="PANTHER" id="PTHR24252">
    <property type="entry name" value="ACROSIN-RELATED"/>
    <property type="match status" value="1"/>
</dbReference>
<dbReference type="PANTHER" id="PTHR24252:SF7">
    <property type="entry name" value="HYALIN"/>
    <property type="match status" value="1"/>
</dbReference>
<dbReference type="Pfam" id="PF00089">
    <property type="entry name" value="Trypsin"/>
    <property type="match status" value="1"/>
</dbReference>
<dbReference type="PRINTS" id="PR00722">
    <property type="entry name" value="CHYMOTRYPSIN"/>
</dbReference>
<dbReference type="SMART" id="SM00020">
    <property type="entry name" value="Tryp_SPc"/>
    <property type="match status" value="1"/>
</dbReference>
<dbReference type="SUPFAM" id="SSF50494">
    <property type="entry name" value="Trypsin-like serine proteases"/>
    <property type="match status" value="1"/>
</dbReference>
<dbReference type="PROSITE" id="PS50240">
    <property type="entry name" value="TRYPSIN_DOM"/>
    <property type="match status" value="1"/>
</dbReference>
<dbReference type="PROSITE" id="PS00134">
    <property type="entry name" value="TRYPSIN_HIS"/>
    <property type="match status" value="1"/>
</dbReference>
<dbReference type="PROSITE" id="PS00135">
    <property type="entry name" value="TRYPSIN_SER"/>
    <property type="match status" value="1"/>
</dbReference>
<keyword id="KW-0020">Allergen</keyword>
<keyword id="KW-0903">Direct protein sequencing</keyword>
<keyword id="KW-1015">Disulfide bond</keyword>
<keyword id="KW-0378">Hydrolase</keyword>
<keyword id="KW-0645">Protease</keyword>
<keyword id="KW-0964">Secreted</keyword>
<keyword id="KW-0720">Serine protease</keyword>
<organism>
    <name type="scientific">Bombus pensylvanicus</name>
    <name type="common">American bumblebee</name>
    <name type="synonym">Apis pensylvanica</name>
    <dbReference type="NCBI Taxonomy" id="28643"/>
    <lineage>
        <taxon>Eukaryota</taxon>
        <taxon>Metazoa</taxon>
        <taxon>Ecdysozoa</taxon>
        <taxon>Arthropoda</taxon>
        <taxon>Hexapoda</taxon>
        <taxon>Insecta</taxon>
        <taxon>Pterygota</taxon>
        <taxon>Neoptera</taxon>
        <taxon>Endopterygota</taxon>
        <taxon>Hymenoptera</taxon>
        <taxon>Apocrita</taxon>
        <taxon>Aculeata</taxon>
        <taxon>Apoidea</taxon>
        <taxon>Anthophila</taxon>
        <taxon>Apidae</taxon>
        <taxon>Bombus</taxon>
        <taxon>Fervidobombus</taxon>
    </lineage>
</organism>
<accession>Q7M4I3</accession>
<sequence>VVGGKPAKLGAWPWMVALGFHNYRQPKKSPEWKCGGSLRISRHVLTAAHCAIHRSLYVVRIADLNLKRDDDGAHPIQMGIESKLIHPDYVYSEHHDDIAILKLEKDVSFSEYIRPICLPIEESLRNNNFIGYNPFVAGWGRLRYKGPLSDALMEVQVPVVRNKVCKRAYSDVSDTVICAGYPKGRKDSCQGDSGGPLMIPQESTYYEIGVVSYGHECALPKYPGVYTRVTSYLDSFILPALKK</sequence>
<protein>
    <recommendedName>
        <fullName>Venom protease</fullName>
        <ecNumber>3.4.21.-</ecNumber>
    </recommendedName>
    <allergenName>Bom p 4</allergenName>
</protein>
<reference key="1">
    <citation type="submission" date="1995-05" db="PIR data bank">
        <authorList>
            <person name="Hoffman D.R."/>
        </authorList>
    </citation>
    <scope>PROTEIN SEQUENCE</scope>
    <source>
        <tissue>Venom</tissue>
    </source>
</reference>
<feature type="chain" id="PRO_0000401926" description="Venom protease">
    <location>
        <begin position="1"/>
        <end position="243"/>
    </location>
</feature>
<feature type="domain" description="Peptidase S1" evidence="2">
    <location>
        <begin position="1"/>
        <end position="243"/>
    </location>
</feature>
<feature type="active site" description="Charge relay system" evidence="1">
    <location>
        <position position="49"/>
    </location>
</feature>
<feature type="active site" description="Charge relay system" evidence="1">
    <location>
        <position position="97"/>
    </location>
</feature>
<feature type="active site" description="Charge relay system" evidence="1">
    <location>
        <position position="193"/>
    </location>
</feature>
<feature type="disulfide bond" evidence="2">
    <location>
        <begin position="34"/>
        <end position="50"/>
    </location>
</feature>
<feature type="disulfide bond" evidence="2">
    <location>
        <begin position="165"/>
        <end position="178"/>
    </location>
</feature>
<feature type="disulfide bond" evidence="2">
    <location>
        <begin position="189"/>
        <end position="217"/>
    </location>
</feature>